<organism>
    <name type="scientific">Streptococcus suis (strain 98HAH33)</name>
    <dbReference type="NCBI Taxonomy" id="391296"/>
    <lineage>
        <taxon>Bacteria</taxon>
        <taxon>Bacillati</taxon>
        <taxon>Bacillota</taxon>
        <taxon>Bacilli</taxon>
        <taxon>Lactobacillales</taxon>
        <taxon>Streptococcaceae</taxon>
        <taxon>Streptococcus</taxon>
    </lineage>
</organism>
<protein>
    <recommendedName>
        <fullName evidence="1">Alanine--tRNA ligase</fullName>
        <ecNumber evidence="1">6.1.1.7</ecNumber>
    </recommendedName>
    <alternativeName>
        <fullName evidence="1">Alanyl-tRNA synthetase</fullName>
        <shortName evidence="1">AlaRS</shortName>
    </alternativeName>
</protein>
<feature type="chain" id="PRO_0000347829" description="Alanine--tRNA ligase">
    <location>
        <begin position="1"/>
        <end position="872"/>
    </location>
</feature>
<feature type="binding site" evidence="1">
    <location>
        <position position="567"/>
    </location>
    <ligand>
        <name>Zn(2+)</name>
        <dbReference type="ChEBI" id="CHEBI:29105"/>
    </ligand>
</feature>
<feature type="binding site" evidence="1">
    <location>
        <position position="571"/>
    </location>
    <ligand>
        <name>Zn(2+)</name>
        <dbReference type="ChEBI" id="CHEBI:29105"/>
    </ligand>
</feature>
<feature type="binding site" evidence="1">
    <location>
        <position position="669"/>
    </location>
    <ligand>
        <name>Zn(2+)</name>
        <dbReference type="ChEBI" id="CHEBI:29105"/>
    </ligand>
</feature>
<feature type="binding site" evidence="1">
    <location>
        <position position="673"/>
    </location>
    <ligand>
        <name>Zn(2+)</name>
        <dbReference type="ChEBI" id="CHEBI:29105"/>
    </ligand>
</feature>
<keyword id="KW-0030">Aminoacyl-tRNA synthetase</keyword>
<keyword id="KW-0067">ATP-binding</keyword>
<keyword id="KW-0963">Cytoplasm</keyword>
<keyword id="KW-0436">Ligase</keyword>
<keyword id="KW-0479">Metal-binding</keyword>
<keyword id="KW-0547">Nucleotide-binding</keyword>
<keyword id="KW-0648">Protein biosynthesis</keyword>
<keyword id="KW-0694">RNA-binding</keyword>
<keyword id="KW-0820">tRNA-binding</keyword>
<keyword id="KW-0862">Zinc</keyword>
<sequence length="872" mass="96228">MKNLSSAQIRQMWLDFWKSKGHSVEPSANLVPVNDPTLLWINSGVATLKKYFDGSVIPDNPRITNAQKSIRTNDIENVGKTARHHTMFEMLGNFSIGDYFRDEAIEWGFELLTSPEWFAFPKDKLYMTYYPDDMDSYNRWIALGVEPSHLIPLEDNFWEIGAGPSGPDTEIFFDRGTDFDPENIGIRLLEEDIENDRYIEIWNIVLSQFNADPAVPRSEYKELPNKNIDTGAGLERLAAIFQGAKTNFETDLFLPIIREVEKISGKTYDQDGDNMSFKVIADHIRALSFAIGDGALPGNEGRGYVLRRLLRRASMHGQRLGITEPFLYKLVETVGNIMESYYPEVLEKRAFIEKIVKSEEESFARTIHTGSQFAEQLMDKLAAEGKSEIDGRDIFKLYDTYGFQVELTEELAEHRGMTLDIAGFEAAMKEQQDRARASVVKGGSMGMQNETLAAITEESTFVYGQTALEASLSVIVADNARTEAVSEGQALLVFDQTPFYAEMGGQVADHGFVKNATGDIVATVIDVQKAPNGQPLHTVELSASISVGQTYTLEIETKRRKGVEKNHTATHLLHAALHNIIGEHATQAGSLNEQDFLRFDFTHFEAVTAEELRRIEEEVNEQIWNAIPVVTVETDIDTAKEMGAMALFGEKYGKEVRVVTIGDYSVELCGGTHVGNTAEIGIFKILKEEGIGSGTRRIIAVTGREAFLAYRDQEDALKEVAATIKSPQIKEVPNKVESLAQQVRDLQKENAALKEKAAAAAAGDVFKNVKDANGIRYIASQVQVSDAGALRTFADNWKQKDYSDVLVLVAAIGDKVNVLVASKSSDVHAGNLIKVLAPIVAGRGGGKPDMAMAGGSDASAIQTLLNSVANNL</sequence>
<reference key="1">
    <citation type="journal article" date="2007" name="PLoS ONE">
        <title>A glimpse of streptococcal toxic shock syndrome from comparative genomics of S. suis 2 Chinese isolates.</title>
        <authorList>
            <person name="Chen C."/>
            <person name="Tang J."/>
            <person name="Dong W."/>
            <person name="Wang C."/>
            <person name="Feng Y."/>
            <person name="Wang J."/>
            <person name="Zheng F."/>
            <person name="Pan X."/>
            <person name="Liu D."/>
            <person name="Li M."/>
            <person name="Song Y."/>
            <person name="Zhu X."/>
            <person name="Sun H."/>
            <person name="Feng T."/>
            <person name="Guo Z."/>
            <person name="Ju A."/>
            <person name="Ge J."/>
            <person name="Dong Y."/>
            <person name="Sun W."/>
            <person name="Jiang Y."/>
            <person name="Wang J."/>
            <person name="Yan J."/>
            <person name="Yang H."/>
            <person name="Wang X."/>
            <person name="Gao G.F."/>
            <person name="Yang R."/>
            <person name="Wang J."/>
            <person name="Yu J."/>
        </authorList>
    </citation>
    <scope>NUCLEOTIDE SEQUENCE [LARGE SCALE GENOMIC DNA]</scope>
    <source>
        <strain>98HAH33</strain>
    </source>
</reference>
<comment type="function">
    <text evidence="1">Catalyzes the attachment of alanine to tRNA(Ala) in a two-step reaction: alanine is first activated by ATP to form Ala-AMP and then transferred to the acceptor end of tRNA(Ala). Also edits incorrectly charged Ser-tRNA(Ala) and Gly-tRNA(Ala) via its editing domain.</text>
</comment>
<comment type="catalytic activity">
    <reaction evidence="1">
        <text>tRNA(Ala) + L-alanine + ATP = L-alanyl-tRNA(Ala) + AMP + diphosphate</text>
        <dbReference type="Rhea" id="RHEA:12540"/>
        <dbReference type="Rhea" id="RHEA-COMP:9657"/>
        <dbReference type="Rhea" id="RHEA-COMP:9923"/>
        <dbReference type="ChEBI" id="CHEBI:30616"/>
        <dbReference type="ChEBI" id="CHEBI:33019"/>
        <dbReference type="ChEBI" id="CHEBI:57972"/>
        <dbReference type="ChEBI" id="CHEBI:78442"/>
        <dbReference type="ChEBI" id="CHEBI:78497"/>
        <dbReference type="ChEBI" id="CHEBI:456215"/>
        <dbReference type="EC" id="6.1.1.7"/>
    </reaction>
</comment>
<comment type="cofactor">
    <cofactor evidence="1">
        <name>Zn(2+)</name>
        <dbReference type="ChEBI" id="CHEBI:29105"/>
    </cofactor>
    <text evidence="1">Binds 1 zinc ion per subunit.</text>
</comment>
<comment type="subcellular location">
    <subcellularLocation>
        <location evidence="1">Cytoplasm</location>
    </subcellularLocation>
</comment>
<comment type="domain">
    <text evidence="1">Consists of three domains; the N-terminal catalytic domain, the editing domain and the C-terminal C-Ala domain. The editing domain removes incorrectly charged amino acids, while the C-Ala domain, along with tRNA(Ala), serves as a bridge to cooperatively bring together the editing and aminoacylation centers thus stimulating deacylation of misacylated tRNAs.</text>
</comment>
<comment type="similarity">
    <text evidence="1">Belongs to the class-II aminoacyl-tRNA synthetase family.</text>
</comment>
<comment type="sequence caution" evidence="2">
    <conflict type="frameshift">
        <sequence resource="EMBL-CDS" id="ABP92410"/>
    </conflict>
</comment>
<dbReference type="EC" id="6.1.1.7" evidence="1"/>
<dbReference type="EMBL" id="CP000408">
    <property type="protein sequence ID" value="ABP92410.1"/>
    <property type="status" value="ALT_FRAME"/>
    <property type="molecule type" value="Genomic_DNA"/>
</dbReference>
<dbReference type="SMR" id="A4W221"/>
<dbReference type="KEGG" id="ssv:SSU98_1252"/>
<dbReference type="HOGENOM" id="CLU_004485_1_1_9"/>
<dbReference type="GO" id="GO:0005829">
    <property type="term" value="C:cytosol"/>
    <property type="evidence" value="ECO:0007669"/>
    <property type="project" value="TreeGrafter"/>
</dbReference>
<dbReference type="GO" id="GO:0004813">
    <property type="term" value="F:alanine-tRNA ligase activity"/>
    <property type="evidence" value="ECO:0007669"/>
    <property type="project" value="UniProtKB-UniRule"/>
</dbReference>
<dbReference type="GO" id="GO:0002161">
    <property type="term" value="F:aminoacyl-tRNA deacylase activity"/>
    <property type="evidence" value="ECO:0007669"/>
    <property type="project" value="TreeGrafter"/>
</dbReference>
<dbReference type="GO" id="GO:0005524">
    <property type="term" value="F:ATP binding"/>
    <property type="evidence" value="ECO:0007669"/>
    <property type="project" value="UniProtKB-UniRule"/>
</dbReference>
<dbReference type="GO" id="GO:0140096">
    <property type="term" value="F:catalytic activity, acting on a protein"/>
    <property type="evidence" value="ECO:0007669"/>
    <property type="project" value="UniProtKB-ARBA"/>
</dbReference>
<dbReference type="GO" id="GO:0016740">
    <property type="term" value="F:transferase activity"/>
    <property type="evidence" value="ECO:0007669"/>
    <property type="project" value="UniProtKB-ARBA"/>
</dbReference>
<dbReference type="GO" id="GO:0000049">
    <property type="term" value="F:tRNA binding"/>
    <property type="evidence" value="ECO:0007669"/>
    <property type="project" value="UniProtKB-KW"/>
</dbReference>
<dbReference type="GO" id="GO:0008270">
    <property type="term" value="F:zinc ion binding"/>
    <property type="evidence" value="ECO:0007669"/>
    <property type="project" value="UniProtKB-UniRule"/>
</dbReference>
<dbReference type="GO" id="GO:0006419">
    <property type="term" value="P:alanyl-tRNA aminoacylation"/>
    <property type="evidence" value="ECO:0007669"/>
    <property type="project" value="UniProtKB-UniRule"/>
</dbReference>
<dbReference type="CDD" id="cd00673">
    <property type="entry name" value="AlaRS_core"/>
    <property type="match status" value="1"/>
</dbReference>
<dbReference type="FunFam" id="3.10.310.40:FF:000001">
    <property type="entry name" value="Alanine--tRNA ligase"/>
    <property type="match status" value="1"/>
</dbReference>
<dbReference type="FunFam" id="3.30.54.20:FF:000001">
    <property type="entry name" value="Alanine--tRNA ligase"/>
    <property type="match status" value="1"/>
</dbReference>
<dbReference type="FunFam" id="3.30.930.10:FF:000046">
    <property type="entry name" value="Alanine--tRNA ligase"/>
    <property type="match status" value="1"/>
</dbReference>
<dbReference type="FunFam" id="3.30.980.10:FF:000004">
    <property type="entry name" value="Alanine--tRNA ligase, cytoplasmic"/>
    <property type="match status" value="1"/>
</dbReference>
<dbReference type="Gene3D" id="2.40.30.130">
    <property type="match status" value="1"/>
</dbReference>
<dbReference type="Gene3D" id="3.10.310.40">
    <property type="match status" value="1"/>
</dbReference>
<dbReference type="Gene3D" id="3.30.54.20">
    <property type="match status" value="1"/>
</dbReference>
<dbReference type="Gene3D" id="6.10.250.550">
    <property type="match status" value="1"/>
</dbReference>
<dbReference type="Gene3D" id="3.30.930.10">
    <property type="entry name" value="Bira Bifunctional Protein, Domain 2"/>
    <property type="match status" value="1"/>
</dbReference>
<dbReference type="Gene3D" id="3.30.980.10">
    <property type="entry name" value="Threonyl-trna Synthetase, Chain A, domain 2"/>
    <property type="match status" value="1"/>
</dbReference>
<dbReference type="HAMAP" id="MF_00036_B">
    <property type="entry name" value="Ala_tRNA_synth_B"/>
    <property type="match status" value="1"/>
</dbReference>
<dbReference type="InterPro" id="IPR045864">
    <property type="entry name" value="aa-tRNA-synth_II/BPL/LPL"/>
</dbReference>
<dbReference type="InterPro" id="IPR002318">
    <property type="entry name" value="Ala-tRNA-lgiase_IIc"/>
</dbReference>
<dbReference type="InterPro" id="IPR018162">
    <property type="entry name" value="Ala-tRNA-ligase_IIc_anticod-bd"/>
</dbReference>
<dbReference type="InterPro" id="IPR018165">
    <property type="entry name" value="Ala-tRNA-synth_IIc_core"/>
</dbReference>
<dbReference type="InterPro" id="IPR018164">
    <property type="entry name" value="Ala-tRNA-synth_IIc_N"/>
</dbReference>
<dbReference type="InterPro" id="IPR050058">
    <property type="entry name" value="Ala-tRNA_ligase"/>
</dbReference>
<dbReference type="InterPro" id="IPR023033">
    <property type="entry name" value="Ala_tRNA_ligase_euk/bac"/>
</dbReference>
<dbReference type="InterPro" id="IPR003156">
    <property type="entry name" value="DHHA1_dom"/>
</dbReference>
<dbReference type="InterPro" id="IPR018163">
    <property type="entry name" value="Thr/Ala-tRNA-synth_IIc_edit"/>
</dbReference>
<dbReference type="InterPro" id="IPR009000">
    <property type="entry name" value="Transl_B-barrel_sf"/>
</dbReference>
<dbReference type="InterPro" id="IPR012947">
    <property type="entry name" value="tRNA_SAD"/>
</dbReference>
<dbReference type="NCBIfam" id="TIGR00344">
    <property type="entry name" value="alaS"/>
    <property type="match status" value="1"/>
</dbReference>
<dbReference type="PANTHER" id="PTHR11777:SF9">
    <property type="entry name" value="ALANINE--TRNA LIGASE, CYTOPLASMIC"/>
    <property type="match status" value="1"/>
</dbReference>
<dbReference type="PANTHER" id="PTHR11777">
    <property type="entry name" value="ALANYL-TRNA SYNTHETASE"/>
    <property type="match status" value="1"/>
</dbReference>
<dbReference type="Pfam" id="PF02272">
    <property type="entry name" value="DHHA1"/>
    <property type="match status" value="1"/>
</dbReference>
<dbReference type="Pfam" id="PF01411">
    <property type="entry name" value="tRNA-synt_2c"/>
    <property type="match status" value="1"/>
</dbReference>
<dbReference type="Pfam" id="PF07973">
    <property type="entry name" value="tRNA_SAD"/>
    <property type="match status" value="1"/>
</dbReference>
<dbReference type="PRINTS" id="PR00980">
    <property type="entry name" value="TRNASYNTHALA"/>
</dbReference>
<dbReference type="SMART" id="SM00863">
    <property type="entry name" value="tRNA_SAD"/>
    <property type="match status" value="1"/>
</dbReference>
<dbReference type="SUPFAM" id="SSF55681">
    <property type="entry name" value="Class II aaRS and biotin synthetases"/>
    <property type="match status" value="1"/>
</dbReference>
<dbReference type="SUPFAM" id="SSF101353">
    <property type="entry name" value="Putative anticodon-binding domain of alanyl-tRNA synthetase (AlaRS)"/>
    <property type="match status" value="1"/>
</dbReference>
<dbReference type="SUPFAM" id="SSF55186">
    <property type="entry name" value="ThrRS/AlaRS common domain"/>
    <property type="match status" value="1"/>
</dbReference>
<dbReference type="SUPFAM" id="SSF50447">
    <property type="entry name" value="Translation proteins"/>
    <property type="match status" value="1"/>
</dbReference>
<dbReference type="PROSITE" id="PS50860">
    <property type="entry name" value="AA_TRNA_LIGASE_II_ALA"/>
    <property type="match status" value="1"/>
</dbReference>
<accession>A4W221</accession>
<proteinExistence type="inferred from homology"/>
<name>SYA_STRS2</name>
<evidence type="ECO:0000255" key="1">
    <source>
        <dbReference type="HAMAP-Rule" id="MF_00036"/>
    </source>
</evidence>
<evidence type="ECO:0000305" key="2"/>
<gene>
    <name evidence="1" type="primary">alaS</name>
    <name type="ordered locus">SSU98_1252</name>
</gene>